<protein>
    <recommendedName>
        <fullName>Putative phosphotransferase enzyme IIB component BB_0367</fullName>
        <ecNumber>2.7.1.-</ecNumber>
    </recommendedName>
    <alternativeName>
        <fullName>Putative PTS system EIIB component</fullName>
    </alternativeName>
</protein>
<proteinExistence type="inferred from homology"/>
<reference key="1">
    <citation type="journal article" date="1997" name="Nature">
        <title>Genomic sequence of a Lyme disease spirochaete, Borrelia burgdorferi.</title>
        <authorList>
            <person name="Fraser C.M."/>
            <person name="Casjens S."/>
            <person name="Huang W.M."/>
            <person name="Sutton G.G."/>
            <person name="Clayton R.A."/>
            <person name="Lathigra R."/>
            <person name="White O."/>
            <person name="Ketchum K.A."/>
            <person name="Dodson R.J."/>
            <person name="Hickey E.K."/>
            <person name="Gwinn M.L."/>
            <person name="Dougherty B.A."/>
            <person name="Tomb J.-F."/>
            <person name="Fleischmann R.D."/>
            <person name="Richardson D.L."/>
            <person name="Peterson J.D."/>
            <person name="Kerlavage A.R."/>
            <person name="Quackenbush J."/>
            <person name="Salzberg S.L."/>
            <person name="Hanson M."/>
            <person name="van Vugt R."/>
            <person name="Palmer N."/>
            <person name="Adams M.D."/>
            <person name="Gocayne J.D."/>
            <person name="Weidman J.F."/>
            <person name="Utterback T.R."/>
            <person name="Watthey L."/>
            <person name="McDonald L.A."/>
            <person name="Artiach P."/>
            <person name="Bowman C."/>
            <person name="Garland S.A."/>
            <person name="Fujii C."/>
            <person name="Cotton M.D."/>
            <person name="Horst K."/>
            <person name="Roberts K.M."/>
            <person name="Hatch B."/>
            <person name="Smith H.O."/>
            <person name="Venter J.C."/>
        </authorList>
    </citation>
    <scope>NUCLEOTIDE SEQUENCE [LARGE SCALE GENOMIC DNA]</scope>
    <source>
        <strain>ATCC 35210 / DSM 4680 / CIP 102532 / B31</strain>
    </source>
</reference>
<gene>
    <name type="ordered locus">BB_0367</name>
</gene>
<sequence>MADLEKINKIKVAEHIVECFGGIKNIKNIDKDLTRIKILVDSNSLVKRDDLTKNDNIIGTIKSNELTEVVINFEIIEDVYNKILYMMNEQKQ</sequence>
<comment type="function">
    <text evidence="1">The phosphoenolpyruvate-dependent sugar phosphotransferase system (PTS), a major carbohydrate active -transport system, catalyzes the phosphorylation of incoming sugar substrates concomitant with their translocation across the cell membrane.</text>
</comment>
<comment type="subcellular location">
    <subcellularLocation>
        <location evidence="3">Cytoplasm</location>
    </subcellularLocation>
</comment>
<comment type="domain">
    <text>The EIIB domain is phosphorylated by phospho-EIIA on a cysteinyl or histidyl residue, depending on the transported sugar. Then, it transfers the phosphoryl group to the sugar substrate concomitantly with the sugar uptake processed by the EIIC domain.</text>
</comment>
<feature type="chain" id="PRO_0000174395" description="Putative phosphotransferase enzyme IIB component BB_0367">
    <location>
        <begin position="1"/>
        <end position="92"/>
    </location>
</feature>
<feature type="domain" description="PTS EIIB type-1" evidence="2">
    <location>
        <begin position="10"/>
        <end position="92"/>
    </location>
</feature>
<keyword id="KW-0963">Cytoplasm</keyword>
<keyword id="KW-0597">Phosphoprotein</keyword>
<keyword id="KW-0598">Phosphotransferase system</keyword>
<keyword id="KW-1185">Reference proteome</keyword>
<keyword id="KW-0808">Transferase</keyword>
<dbReference type="EC" id="2.7.1.-"/>
<dbReference type="EMBL" id="AE000783">
    <property type="protein sequence ID" value="AAC66754.1"/>
    <property type="molecule type" value="Genomic_DNA"/>
</dbReference>
<dbReference type="PIR" id="F70145">
    <property type="entry name" value="F70145"/>
</dbReference>
<dbReference type="RefSeq" id="NP_212501.1">
    <property type="nucleotide sequence ID" value="NC_001318.1"/>
</dbReference>
<dbReference type="RefSeq" id="WP_002657824.1">
    <property type="nucleotide sequence ID" value="NC_001318.1"/>
</dbReference>
<dbReference type="SMR" id="O51340"/>
<dbReference type="STRING" id="224326.BB_0367"/>
<dbReference type="PaxDb" id="224326-BB_0367"/>
<dbReference type="EnsemblBacteria" id="AAC66754">
    <property type="protein sequence ID" value="AAC66754"/>
    <property type="gene ID" value="BB_0367"/>
</dbReference>
<dbReference type="KEGG" id="bbu:BB_0367"/>
<dbReference type="PATRIC" id="fig|224326.49.peg.762"/>
<dbReference type="HOGENOM" id="CLU_2407420_0_0_12"/>
<dbReference type="OrthoDB" id="350717at2"/>
<dbReference type="Proteomes" id="UP000001807">
    <property type="component" value="Chromosome"/>
</dbReference>
<dbReference type="GO" id="GO:0005737">
    <property type="term" value="C:cytoplasm"/>
    <property type="evidence" value="ECO:0007669"/>
    <property type="project" value="UniProtKB-SubCell"/>
</dbReference>
<dbReference type="GO" id="GO:0008982">
    <property type="term" value="F:protein-N(PI)-phosphohistidine-sugar phosphotransferase activity"/>
    <property type="evidence" value="ECO:0007669"/>
    <property type="project" value="InterPro"/>
</dbReference>
<dbReference type="GO" id="GO:0009401">
    <property type="term" value="P:phosphoenolpyruvate-dependent sugar phosphotransferase system"/>
    <property type="evidence" value="ECO:0007669"/>
    <property type="project" value="UniProtKB-KW"/>
</dbReference>
<dbReference type="Gene3D" id="3.30.1360.60">
    <property type="entry name" value="Glucose permease domain IIB"/>
    <property type="match status" value="1"/>
</dbReference>
<dbReference type="InterPro" id="IPR036878">
    <property type="entry name" value="Glu_permease_IIB"/>
</dbReference>
<dbReference type="InterPro" id="IPR001996">
    <property type="entry name" value="PTS_IIB_1"/>
</dbReference>
<dbReference type="SUPFAM" id="SSF55604">
    <property type="entry name" value="Glucose permease domain IIB"/>
    <property type="match status" value="1"/>
</dbReference>
<dbReference type="PROSITE" id="PS51098">
    <property type="entry name" value="PTS_EIIB_TYPE_1"/>
    <property type="match status" value="1"/>
</dbReference>
<organism>
    <name type="scientific">Borreliella burgdorferi (strain ATCC 35210 / DSM 4680 / CIP 102532 / B31)</name>
    <name type="common">Borrelia burgdorferi</name>
    <dbReference type="NCBI Taxonomy" id="224326"/>
    <lineage>
        <taxon>Bacteria</taxon>
        <taxon>Pseudomonadati</taxon>
        <taxon>Spirochaetota</taxon>
        <taxon>Spirochaetia</taxon>
        <taxon>Spirochaetales</taxon>
        <taxon>Borreliaceae</taxon>
        <taxon>Borreliella</taxon>
    </lineage>
</organism>
<name>Y367_BORBU</name>
<evidence type="ECO:0000250" key="1"/>
<evidence type="ECO:0000255" key="2">
    <source>
        <dbReference type="PROSITE-ProRule" id="PRU00421"/>
    </source>
</evidence>
<evidence type="ECO:0000305" key="3"/>
<accession>O51340</accession>